<dbReference type="PIR" id="S05632">
    <property type="entry name" value="S05632"/>
</dbReference>
<dbReference type="SMR" id="P18743"/>
<dbReference type="Proteomes" id="UP000186698">
    <property type="component" value="Unplaced"/>
</dbReference>
<dbReference type="GO" id="GO:0000785">
    <property type="term" value="C:chromatin"/>
    <property type="evidence" value="ECO:0007669"/>
    <property type="project" value="TreeGrafter"/>
</dbReference>
<dbReference type="GO" id="GO:0031519">
    <property type="term" value="C:PcG protein complex"/>
    <property type="evidence" value="ECO:0007669"/>
    <property type="project" value="TreeGrafter"/>
</dbReference>
<dbReference type="GO" id="GO:0005667">
    <property type="term" value="C:transcription regulator complex"/>
    <property type="evidence" value="ECO:0007669"/>
    <property type="project" value="TreeGrafter"/>
</dbReference>
<dbReference type="GO" id="GO:0000981">
    <property type="term" value="F:DNA-binding transcription factor activity, RNA polymerase II-specific"/>
    <property type="evidence" value="ECO:0000318"/>
    <property type="project" value="GO_Central"/>
</dbReference>
<dbReference type="GO" id="GO:0000978">
    <property type="term" value="F:RNA polymerase II cis-regulatory region sequence-specific DNA binding"/>
    <property type="evidence" value="ECO:0000318"/>
    <property type="project" value="GO_Central"/>
</dbReference>
<dbReference type="GO" id="GO:0008270">
    <property type="term" value="F:zinc ion binding"/>
    <property type="evidence" value="ECO:0007669"/>
    <property type="project" value="UniProtKB-KW"/>
</dbReference>
<dbReference type="GO" id="GO:0006357">
    <property type="term" value="P:regulation of transcription by RNA polymerase II"/>
    <property type="evidence" value="ECO:0000318"/>
    <property type="project" value="GO_Central"/>
</dbReference>
<dbReference type="FunFam" id="3.30.160.60:FF:000706">
    <property type="entry name" value="Zinc finger protein"/>
    <property type="match status" value="2"/>
</dbReference>
<dbReference type="FunFam" id="3.30.160.60:FF:000759">
    <property type="entry name" value="zinc finger protein 16"/>
    <property type="match status" value="1"/>
</dbReference>
<dbReference type="FunFam" id="3.30.160.60:FF:002716">
    <property type="entry name" value="Zinc finger protein 212"/>
    <property type="match status" value="1"/>
</dbReference>
<dbReference type="FunFam" id="3.30.160.60:FF:000690">
    <property type="entry name" value="Zinc finger protein 354C"/>
    <property type="match status" value="1"/>
</dbReference>
<dbReference type="Gene3D" id="3.30.160.60">
    <property type="entry name" value="Classic Zinc Finger"/>
    <property type="match status" value="5"/>
</dbReference>
<dbReference type="InterPro" id="IPR036236">
    <property type="entry name" value="Znf_C2H2_sf"/>
</dbReference>
<dbReference type="InterPro" id="IPR013087">
    <property type="entry name" value="Znf_C2H2_type"/>
</dbReference>
<dbReference type="PANTHER" id="PTHR14003">
    <property type="entry name" value="TRANSCRIPTIONAL REPRESSOR PROTEIN YY"/>
    <property type="match status" value="1"/>
</dbReference>
<dbReference type="PANTHER" id="PTHR14003:SF23">
    <property type="entry name" value="ZINC FINGER PROTEIN 143"/>
    <property type="match status" value="1"/>
</dbReference>
<dbReference type="Pfam" id="PF00096">
    <property type="entry name" value="zf-C2H2"/>
    <property type="match status" value="4"/>
</dbReference>
<dbReference type="SMART" id="SM00355">
    <property type="entry name" value="ZnF_C2H2"/>
    <property type="match status" value="5"/>
</dbReference>
<dbReference type="SUPFAM" id="SSF57667">
    <property type="entry name" value="beta-beta-alpha zinc fingers"/>
    <property type="match status" value="3"/>
</dbReference>
<dbReference type="PROSITE" id="PS00028">
    <property type="entry name" value="ZINC_FINGER_C2H2_1"/>
    <property type="match status" value="4"/>
</dbReference>
<dbReference type="PROSITE" id="PS50157">
    <property type="entry name" value="ZINC_FINGER_C2H2_2"/>
    <property type="match status" value="5"/>
</dbReference>
<reference key="1">
    <citation type="journal article" date="1989" name="J. Mol. Biol.">
        <title>Second-order repeats in Xenopus laevis finger proteins.</title>
        <authorList>
            <person name="Nietfeld W."/>
            <person name="El-Baradi T."/>
            <person name="Mentzel H."/>
            <person name="Pieler T."/>
            <person name="Koester M."/>
            <person name="Poeting A."/>
            <person name="Knoechel W."/>
        </authorList>
    </citation>
    <scope>NUCLEOTIDE SEQUENCE</scope>
</reference>
<name>ZO2_XENLA</name>
<protein>
    <recommendedName>
        <fullName>Oocyte zinc finger protein XlCOF2</fullName>
    </recommendedName>
</protein>
<comment type="function">
    <text>May be involved in transcriptional regulation.</text>
</comment>
<comment type="subcellular location">
    <subcellularLocation>
        <location evidence="2">Nucleus</location>
    </subcellularLocation>
</comment>
<comment type="similarity">
    <text evidence="2">Belongs to the krueppel C2H2-type zinc-finger protein family.</text>
</comment>
<proteinExistence type="inferred from homology"/>
<sequence length="157" mass="17953">TGEKPFTCTECGKNFSFTTSFIRHMRIHTGEKPYSCADCGKHFSEKMYLQFHQKNPSECEEYVTLKATLQSHQSVEKPFTCTECGKCFSLSSYLHRHQRLHTGDRPFSCAECGKAFSGKAQLQDHQNTHTGEKPFTCTECGKCFTRKGSLQMHQKIH</sequence>
<accession>P18743</accession>
<feature type="chain" id="PRO_0000047808" description="Oocyte zinc finger protein XlCOF2">
    <location>
        <begin position="1" status="less than"/>
        <end position="157" status="greater than"/>
    </location>
</feature>
<feature type="zinc finger region" description="C2H2-type 1" evidence="1">
    <location>
        <begin position="6"/>
        <end position="28"/>
    </location>
</feature>
<feature type="zinc finger region" description="C2H2-type 2" evidence="1">
    <location>
        <begin position="34"/>
        <end position="56"/>
    </location>
</feature>
<feature type="zinc finger region" description="C2H2-type 3" evidence="1">
    <location>
        <begin position="79"/>
        <end position="101"/>
    </location>
</feature>
<feature type="zinc finger region" description="C2H2-type 4" evidence="1">
    <location>
        <begin position="107"/>
        <end position="129"/>
    </location>
</feature>
<feature type="zinc finger region" description="C2H2-type 5" evidence="1">
    <location>
        <begin position="135"/>
        <end position="157"/>
    </location>
</feature>
<feature type="non-terminal residue">
    <location>
        <position position="1"/>
    </location>
</feature>
<feature type="non-terminal residue">
    <location>
        <position position="157"/>
    </location>
</feature>
<organism>
    <name type="scientific">Xenopus laevis</name>
    <name type="common">African clawed frog</name>
    <dbReference type="NCBI Taxonomy" id="8355"/>
    <lineage>
        <taxon>Eukaryota</taxon>
        <taxon>Metazoa</taxon>
        <taxon>Chordata</taxon>
        <taxon>Craniata</taxon>
        <taxon>Vertebrata</taxon>
        <taxon>Euteleostomi</taxon>
        <taxon>Amphibia</taxon>
        <taxon>Batrachia</taxon>
        <taxon>Anura</taxon>
        <taxon>Pipoidea</taxon>
        <taxon>Pipidae</taxon>
        <taxon>Xenopodinae</taxon>
        <taxon>Xenopus</taxon>
        <taxon>Xenopus</taxon>
    </lineage>
</organism>
<keyword id="KW-0238">DNA-binding</keyword>
<keyword id="KW-0479">Metal-binding</keyword>
<keyword id="KW-0539">Nucleus</keyword>
<keyword id="KW-1185">Reference proteome</keyword>
<keyword id="KW-0677">Repeat</keyword>
<keyword id="KW-0804">Transcription</keyword>
<keyword id="KW-0805">Transcription regulation</keyword>
<keyword id="KW-0862">Zinc</keyword>
<keyword id="KW-0863">Zinc-finger</keyword>
<evidence type="ECO:0000255" key="1">
    <source>
        <dbReference type="PROSITE-ProRule" id="PRU00042"/>
    </source>
</evidence>
<evidence type="ECO:0000305" key="2"/>